<gene>
    <name evidence="1" type="primary">atpH</name>
    <name type="ordered locus">Ctha_1381</name>
</gene>
<organism>
    <name type="scientific">Chloroherpeton thalassium (strain ATCC 35110 / GB-78)</name>
    <dbReference type="NCBI Taxonomy" id="517418"/>
    <lineage>
        <taxon>Bacteria</taxon>
        <taxon>Pseudomonadati</taxon>
        <taxon>Chlorobiota</taxon>
        <taxon>Chlorobiia</taxon>
        <taxon>Chlorobiales</taxon>
        <taxon>Chloroherpetonaceae</taxon>
        <taxon>Chloroherpeton</taxon>
    </lineage>
</organism>
<feature type="chain" id="PRO_0000370940" description="ATP synthase subunit delta">
    <location>
        <begin position="1"/>
        <end position="183"/>
    </location>
</feature>
<dbReference type="EMBL" id="CP001100">
    <property type="protein sequence ID" value="ACF13844.1"/>
    <property type="molecule type" value="Genomic_DNA"/>
</dbReference>
<dbReference type="RefSeq" id="WP_012499928.1">
    <property type="nucleotide sequence ID" value="NC_011026.1"/>
</dbReference>
<dbReference type="SMR" id="B3QZF1"/>
<dbReference type="STRING" id="517418.Ctha_1381"/>
<dbReference type="KEGG" id="cts:Ctha_1381"/>
<dbReference type="eggNOG" id="COG0712">
    <property type="taxonomic scope" value="Bacteria"/>
</dbReference>
<dbReference type="HOGENOM" id="CLU_085114_4_0_10"/>
<dbReference type="OrthoDB" id="9802471at2"/>
<dbReference type="Proteomes" id="UP000001208">
    <property type="component" value="Chromosome"/>
</dbReference>
<dbReference type="GO" id="GO:0005886">
    <property type="term" value="C:plasma membrane"/>
    <property type="evidence" value="ECO:0007669"/>
    <property type="project" value="UniProtKB-SubCell"/>
</dbReference>
<dbReference type="GO" id="GO:0045259">
    <property type="term" value="C:proton-transporting ATP synthase complex"/>
    <property type="evidence" value="ECO:0007669"/>
    <property type="project" value="UniProtKB-KW"/>
</dbReference>
<dbReference type="GO" id="GO:0046933">
    <property type="term" value="F:proton-transporting ATP synthase activity, rotational mechanism"/>
    <property type="evidence" value="ECO:0007669"/>
    <property type="project" value="UniProtKB-UniRule"/>
</dbReference>
<dbReference type="Gene3D" id="1.10.520.20">
    <property type="entry name" value="N-terminal domain of the delta subunit of the F1F0-ATP synthase"/>
    <property type="match status" value="1"/>
</dbReference>
<dbReference type="HAMAP" id="MF_01416">
    <property type="entry name" value="ATP_synth_delta_bact"/>
    <property type="match status" value="1"/>
</dbReference>
<dbReference type="InterPro" id="IPR026015">
    <property type="entry name" value="ATP_synth_OSCP/delta_N_sf"/>
</dbReference>
<dbReference type="InterPro" id="IPR020781">
    <property type="entry name" value="ATPase_OSCP/d_CS"/>
</dbReference>
<dbReference type="InterPro" id="IPR000711">
    <property type="entry name" value="ATPase_OSCP/dsu"/>
</dbReference>
<dbReference type="NCBIfam" id="TIGR01145">
    <property type="entry name" value="ATP_synt_delta"/>
    <property type="match status" value="1"/>
</dbReference>
<dbReference type="NCBIfam" id="NF004402">
    <property type="entry name" value="PRK05758.2-2"/>
    <property type="match status" value="1"/>
</dbReference>
<dbReference type="PANTHER" id="PTHR11910">
    <property type="entry name" value="ATP SYNTHASE DELTA CHAIN"/>
    <property type="match status" value="1"/>
</dbReference>
<dbReference type="Pfam" id="PF00213">
    <property type="entry name" value="OSCP"/>
    <property type="match status" value="1"/>
</dbReference>
<dbReference type="PRINTS" id="PR00125">
    <property type="entry name" value="ATPASEDELTA"/>
</dbReference>
<dbReference type="SUPFAM" id="SSF47928">
    <property type="entry name" value="N-terminal domain of the delta subunit of the F1F0-ATP synthase"/>
    <property type="match status" value="1"/>
</dbReference>
<dbReference type="PROSITE" id="PS00389">
    <property type="entry name" value="ATPASE_DELTA"/>
    <property type="match status" value="1"/>
</dbReference>
<proteinExistence type="inferred from homology"/>
<protein>
    <recommendedName>
        <fullName evidence="1">ATP synthase subunit delta</fullName>
    </recommendedName>
    <alternativeName>
        <fullName evidence="1">ATP synthase F(1) sector subunit delta</fullName>
    </alternativeName>
    <alternativeName>
        <fullName evidence="1">F-type ATPase subunit delta</fullName>
        <shortName evidence="1">F-ATPase subunit delta</shortName>
    </alternativeName>
</protein>
<comment type="function">
    <text evidence="1">F(1)F(0) ATP synthase produces ATP from ADP in the presence of a proton or sodium gradient. F-type ATPases consist of two structural domains, F(1) containing the extramembraneous catalytic core and F(0) containing the membrane proton channel, linked together by a central stalk and a peripheral stalk. During catalysis, ATP synthesis in the catalytic domain of F(1) is coupled via a rotary mechanism of the central stalk subunits to proton translocation.</text>
</comment>
<comment type="function">
    <text evidence="1">This protein is part of the stalk that links CF(0) to CF(1). It either transmits conformational changes from CF(0) to CF(1) or is implicated in proton conduction.</text>
</comment>
<comment type="subunit">
    <text evidence="1">F-type ATPases have 2 components, F(1) - the catalytic core - and F(0) - the membrane proton channel. F(1) has five subunits: alpha(3), beta(3), gamma(1), delta(1), epsilon(1). F(0) has three main subunits: a(1), b(2) and c(10-14). The alpha and beta chains form an alternating ring which encloses part of the gamma chain. F(1) is attached to F(0) by a central stalk formed by the gamma and epsilon chains, while a peripheral stalk is formed by the delta and b chains.</text>
</comment>
<comment type="subcellular location">
    <subcellularLocation>
        <location evidence="1">Cell inner membrane</location>
        <topology evidence="1">Peripheral membrane protein</topology>
    </subcellularLocation>
</comment>
<comment type="similarity">
    <text evidence="1">Belongs to the ATPase delta chain family.</text>
</comment>
<reference key="1">
    <citation type="submission" date="2008-06" db="EMBL/GenBank/DDBJ databases">
        <title>Complete sequence of Chloroherpeton thalassium ATCC 35110.</title>
        <authorList>
            <consortium name="US DOE Joint Genome Institute"/>
            <person name="Lucas S."/>
            <person name="Copeland A."/>
            <person name="Lapidus A."/>
            <person name="Glavina del Rio T."/>
            <person name="Dalin E."/>
            <person name="Tice H."/>
            <person name="Bruce D."/>
            <person name="Goodwin L."/>
            <person name="Pitluck S."/>
            <person name="Schmutz J."/>
            <person name="Larimer F."/>
            <person name="Land M."/>
            <person name="Hauser L."/>
            <person name="Kyrpides N."/>
            <person name="Mikhailova N."/>
            <person name="Liu Z."/>
            <person name="Li T."/>
            <person name="Zhao F."/>
            <person name="Overmann J."/>
            <person name="Bryant D.A."/>
            <person name="Richardson P."/>
        </authorList>
    </citation>
    <scope>NUCLEOTIDE SEQUENCE [LARGE SCALE GENOMIC DNA]</scope>
    <source>
        <strain>ATCC 35110 / GB-78</strain>
    </source>
</reference>
<keyword id="KW-0066">ATP synthesis</keyword>
<keyword id="KW-0997">Cell inner membrane</keyword>
<keyword id="KW-1003">Cell membrane</keyword>
<keyword id="KW-0139">CF(1)</keyword>
<keyword id="KW-0375">Hydrogen ion transport</keyword>
<keyword id="KW-0406">Ion transport</keyword>
<keyword id="KW-0472">Membrane</keyword>
<keyword id="KW-1185">Reference proteome</keyword>
<keyword id="KW-0813">Transport</keyword>
<accession>B3QZF1</accession>
<name>ATPD_CHLT3</name>
<evidence type="ECO:0000255" key="1">
    <source>
        <dbReference type="HAMAP-Rule" id="MF_01416"/>
    </source>
</evidence>
<sequence>MHSISIVGRRYALALMEVAVDQNIVGQVMADFELIEQTMVEAKQLRLAIQSPLIQAYKKAALLKEVFGGKVSQQVATFLFLLASKNRAEYLPEVIQEYRALLDEQNGVISVDIKTAVDLDDKQTKQLKDKLEAYTSKKVRVHLATDKQLIGGLTIQIGDTVLDGSIRHQLAMLKNNLAAGALN</sequence>